<feature type="signal peptide" evidence="3">
    <location>
        <begin position="1"/>
        <end position="33"/>
    </location>
</feature>
<feature type="chain" id="PRO_0000002906" description="L-ascorbate oxidase">
    <location>
        <begin position="34"/>
        <end position="587"/>
    </location>
</feature>
<feature type="domain" description="Plastocyanin-like 1">
    <location>
        <begin position="38"/>
        <end position="157"/>
    </location>
</feature>
<feature type="domain" description="Plastocyanin-like 2">
    <location>
        <begin position="169"/>
        <end position="335"/>
    </location>
</feature>
<feature type="domain" description="Plastocyanin-like 3">
    <location>
        <begin position="379"/>
        <end position="559"/>
    </location>
</feature>
<feature type="binding site" description="type 2 copper site" evidence="1">
    <location>
        <position position="95"/>
    </location>
    <ligand>
        <name>Cu cation</name>
        <dbReference type="ChEBI" id="CHEBI:23378"/>
        <label>1</label>
    </ligand>
</feature>
<feature type="binding site" description="type 3 copper site" evidence="1">
    <location>
        <position position="97"/>
    </location>
    <ligand>
        <name>Cu cation</name>
        <dbReference type="ChEBI" id="CHEBI:23378"/>
        <label>2</label>
    </ligand>
</feature>
<feature type="binding site" description="type 3 copper site" evidence="1">
    <location>
        <position position="139"/>
    </location>
    <ligand>
        <name>Cu cation</name>
        <dbReference type="ChEBI" id="CHEBI:23378"/>
        <label>2</label>
    </ligand>
</feature>
<feature type="binding site" description="type 3 copper site" evidence="1">
    <location>
        <position position="141"/>
    </location>
    <ligand>
        <name>Cu cation</name>
        <dbReference type="ChEBI" id="CHEBI:23378"/>
        <label>3</label>
    </ligand>
</feature>
<feature type="binding site" description="type 1 copper site" evidence="1">
    <location>
        <position position="480"/>
    </location>
    <ligand>
        <name>Cu cation</name>
        <dbReference type="ChEBI" id="CHEBI:23378"/>
        <label>4</label>
    </ligand>
</feature>
<feature type="binding site" description="type 2 copper site" evidence="1">
    <location>
        <position position="483"/>
    </location>
    <ligand>
        <name>Cu cation</name>
        <dbReference type="ChEBI" id="CHEBI:23378"/>
        <label>1</label>
    </ligand>
</feature>
<feature type="binding site" description="type 3 copper site" evidence="1">
    <location>
        <position position="485"/>
    </location>
    <ligand>
        <name>Cu cation</name>
        <dbReference type="ChEBI" id="CHEBI:23378"/>
        <label>3</label>
    </ligand>
</feature>
<feature type="binding site" description="type 3 copper site" evidence="1">
    <location>
        <position position="542"/>
    </location>
    <ligand>
        <name>Cu cation</name>
        <dbReference type="ChEBI" id="CHEBI:23378"/>
        <label>3</label>
    </ligand>
</feature>
<feature type="binding site" description="type 1 copper site" evidence="1">
    <location>
        <position position="543"/>
    </location>
    <ligand>
        <name>Cu cation</name>
        <dbReference type="ChEBI" id="CHEBI:23378"/>
        <label>4</label>
    </ligand>
</feature>
<feature type="binding site" description="type 3 copper site" evidence="1">
    <location>
        <position position="544"/>
    </location>
    <ligand>
        <name>Cu cation</name>
        <dbReference type="ChEBI" id="CHEBI:23378"/>
        <label>2</label>
    </ligand>
</feature>
<feature type="binding site" description="type 1 copper site" evidence="1">
    <location>
        <position position="548"/>
    </location>
    <ligand>
        <name>Cu cation</name>
        <dbReference type="ChEBI" id="CHEBI:23378"/>
        <label>4</label>
    </ligand>
</feature>
<feature type="binding site" description="type 1 copper site" evidence="1">
    <location>
        <position position="553"/>
    </location>
    <ligand>
        <name>Cu cation</name>
        <dbReference type="ChEBI" id="CHEBI:23378"/>
        <label>4</label>
    </ligand>
</feature>
<feature type="glycosylation site" description="N-linked (GlcNAc...) asparagine" evidence="2">
    <location>
        <position position="360"/>
    </location>
</feature>
<feature type="glycosylation site" description="N-linked (GlcNAc...) asparagine" evidence="2">
    <location>
        <position position="401"/>
    </location>
</feature>
<feature type="glycosylation site" description="N-linked (GlcNAc...) asparagine" evidence="2">
    <location>
        <position position="475"/>
    </location>
</feature>
<feature type="disulfide bond" evidence="1">
    <location>
        <begin position="54"/>
        <end position="236"/>
    </location>
</feature>
<feature type="disulfide bond" evidence="1">
    <location>
        <begin position="116"/>
        <end position="574"/>
    </location>
</feature>
<feature type="disulfide bond" evidence="1">
    <location>
        <begin position="215"/>
        <end position="228"/>
    </location>
</feature>
<accession>P14133</accession>
<comment type="function">
    <text>May be involved in a redox system involving ascorbic acid.</text>
</comment>
<comment type="catalytic activity">
    <reaction>
        <text>4 L-ascorbate + O2 = 4 monodehydro-L-ascorbate radical + 2 H2O</text>
        <dbReference type="Rhea" id="RHEA:30243"/>
        <dbReference type="ChEBI" id="CHEBI:15377"/>
        <dbReference type="ChEBI" id="CHEBI:15379"/>
        <dbReference type="ChEBI" id="CHEBI:38290"/>
        <dbReference type="ChEBI" id="CHEBI:59513"/>
        <dbReference type="EC" id="1.10.3.3"/>
    </reaction>
</comment>
<comment type="cofactor">
    <cofactor evidence="1">
        <name>Cu cation</name>
        <dbReference type="ChEBI" id="CHEBI:23378"/>
    </cofactor>
    <text evidence="1">Binds 4 Cu cations per monomer.</text>
</comment>
<comment type="subunit">
    <text evidence="1">Dimer.</text>
</comment>
<comment type="subcellular location">
    <subcellularLocation>
        <location evidence="4">Secreted</location>
    </subcellularLocation>
</comment>
<comment type="similarity">
    <text evidence="4">Belongs to the multicopper oxidase family.</text>
</comment>
<organism>
    <name type="scientific">Cucumis sativus</name>
    <name type="common">Cucumber</name>
    <dbReference type="NCBI Taxonomy" id="3659"/>
    <lineage>
        <taxon>Eukaryota</taxon>
        <taxon>Viridiplantae</taxon>
        <taxon>Streptophyta</taxon>
        <taxon>Embryophyta</taxon>
        <taxon>Tracheophyta</taxon>
        <taxon>Spermatophyta</taxon>
        <taxon>Magnoliopsida</taxon>
        <taxon>eudicotyledons</taxon>
        <taxon>Gunneridae</taxon>
        <taxon>Pentapetalae</taxon>
        <taxon>rosids</taxon>
        <taxon>fabids</taxon>
        <taxon>Cucurbitales</taxon>
        <taxon>Cucurbitaceae</taxon>
        <taxon>Benincaseae</taxon>
        <taxon>Cucumis</taxon>
    </lineage>
</organism>
<proteinExistence type="evidence at protein level"/>
<protein>
    <recommendedName>
        <fullName>L-ascorbate oxidase</fullName>
        <shortName>ASO</shortName>
        <shortName>Ascorbase</shortName>
        <ecNumber>1.10.3.3</ecNumber>
    </recommendedName>
</protein>
<keyword id="KW-0186">Copper</keyword>
<keyword id="KW-0903">Direct protein sequencing</keyword>
<keyword id="KW-1015">Disulfide bond</keyword>
<keyword id="KW-0325">Glycoprotein</keyword>
<keyword id="KW-0479">Metal-binding</keyword>
<keyword id="KW-0560">Oxidoreductase</keyword>
<keyword id="KW-0677">Repeat</keyword>
<keyword id="KW-0964">Secreted</keyword>
<keyword id="KW-0732">Signal</keyword>
<sequence length="587" mass="65876">MAKVADKPFFPKPFLSFLVLSIIFGFGITLSEAGFPKIKHYKWDVEYMFWSPDCVENIVMGINGEFPGPTIRANAGDIVVVELTNKLHTEGVVIHWHGILQRGTPWADGTASISQCAINPGETFTYRFVVDKAGTYFYHGHLGMQRSAGLYGSLIVDPPEGRSEPFHYDEEINLLLSDWWHQSVHKQEVGLSSKPMRWIGEPQSILINGKGQFDCSIAAKYNQGLKQCELSGKEKCAPFILHVQPKKTYRIRIASTTALASLNFAIGNHELLVVEADGNYVQPFVTSDIDIYSGESYSVLITTDQNPLENYWVSIGVRARLPKTPPGLTLLNYLPNSASKLPISPPPETPHWEDFDRSKNFTFRIFAAMGSPKPPVRYNRRLFLLNTQNRINGFMKWAINNVSLALPPTPYLAAMKMRLNTAFNQNPPPETFPLNYDINNPPPNPETTTGNGVYKFNMGETVDVILQNANMLNPNMSEIHPWHLHGHDFWVLGYGEGKFYAPEDEKKLNLKNPPLRNTVVIFPYGWTAIRFVADNPGVWAFHCHIEPHLHMGMGVVFAEGVHMVGMIPPKALACGSTALVKNYPRLP</sequence>
<evidence type="ECO:0000250" key="1"/>
<evidence type="ECO:0000255" key="2"/>
<evidence type="ECO:0000269" key="3">
    <source>
    </source>
</evidence>
<evidence type="ECO:0000305" key="4"/>
<dbReference type="EC" id="1.10.3.3"/>
<dbReference type="EMBL" id="J04494">
    <property type="protein sequence ID" value="AAA33119.1"/>
    <property type="molecule type" value="mRNA"/>
</dbReference>
<dbReference type="PIR" id="A30094">
    <property type="entry name" value="KSKVAO"/>
</dbReference>
<dbReference type="RefSeq" id="NP_001392036.1">
    <property type="nucleotide sequence ID" value="NM_001405107.1"/>
</dbReference>
<dbReference type="RefSeq" id="XP_004149015.1">
    <property type="nucleotide sequence ID" value="XM_004148967.2"/>
</dbReference>
<dbReference type="SMR" id="P14133"/>
<dbReference type="EnsemblPlants" id="KGN66418">
    <property type="protein sequence ID" value="KGN66418"/>
    <property type="gene ID" value="Csa_1G604040"/>
</dbReference>
<dbReference type="GeneID" id="101215231"/>
<dbReference type="Gramene" id="KGN66418">
    <property type="protein sequence ID" value="KGN66418"/>
    <property type="gene ID" value="Csa_1G604040"/>
</dbReference>
<dbReference type="KEGG" id="csv:101215231"/>
<dbReference type="eggNOG" id="KOG1263">
    <property type="taxonomic scope" value="Eukaryota"/>
</dbReference>
<dbReference type="OMA" id="WHSHTEH"/>
<dbReference type="OrthoDB" id="2121828at2759"/>
<dbReference type="BRENDA" id="1.10.3.3">
    <property type="organism ID" value="1733"/>
</dbReference>
<dbReference type="GO" id="GO:0005576">
    <property type="term" value="C:extracellular region"/>
    <property type="evidence" value="ECO:0007669"/>
    <property type="project" value="UniProtKB-SubCell"/>
</dbReference>
<dbReference type="GO" id="GO:0005507">
    <property type="term" value="F:copper ion binding"/>
    <property type="evidence" value="ECO:0007669"/>
    <property type="project" value="InterPro"/>
</dbReference>
<dbReference type="GO" id="GO:0008447">
    <property type="term" value="F:L-ascorbate oxidase activity"/>
    <property type="evidence" value="ECO:0007669"/>
    <property type="project" value="UniProtKB-EC"/>
</dbReference>
<dbReference type="CDD" id="cd13845">
    <property type="entry name" value="CuRO_1_AAO"/>
    <property type="match status" value="1"/>
</dbReference>
<dbReference type="CDD" id="cd13893">
    <property type="entry name" value="CuRO_3_AAO"/>
    <property type="match status" value="1"/>
</dbReference>
<dbReference type="FunFam" id="2.60.40.420:FF:000058">
    <property type="entry name" value="L-ascorbate oxidase"/>
    <property type="match status" value="1"/>
</dbReference>
<dbReference type="FunFam" id="2.60.40.420:FF:000059">
    <property type="entry name" value="L-ascorbate oxidase"/>
    <property type="match status" value="1"/>
</dbReference>
<dbReference type="FunFam" id="2.60.40.420:FF:000060">
    <property type="entry name" value="L-ascorbate oxidase"/>
    <property type="match status" value="1"/>
</dbReference>
<dbReference type="Gene3D" id="2.60.40.420">
    <property type="entry name" value="Cupredoxins - blue copper proteins"/>
    <property type="match status" value="3"/>
</dbReference>
<dbReference type="InterPro" id="IPR011707">
    <property type="entry name" value="Cu-oxidase-like_N"/>
</dbReference>
<dbReference type="InterPro" id="IPR001117">
    <property type="entry name" value="Cu-oxidase_2nd"/>
</dbReference>
<dbReference type="InterPro" id="IPR011706">
    <property type="entry name" value="Cu-oxidase_C"/>
</dbReference>
<dbReference type="InterPro" id="IPR045087">
    <property type="entry name" value="Cu-oxidase_fam"/>
</dbReference>
<dbReference type="InterPro" id="IPR033138">
    <property type="entry name" value="Cu_oxidase_CS"/>
</dbReference>
<dbReference type="InterPro" id="IPR002355">
    <property type="entry name" value="Cu_oxidase_Cu_BS"/>
</dbReference>
<dbReference type="InterPro" id="IPR008972">
    <property type="entry name" value="Cupredoxin"/>
</dbReference>
<dbReference type="InterPro" id="IPR034259">
    <property type="entry name" value="CuRO_1_AAO"/>
</dbReference>
<dbReference type="InterPro" id="IPR034267">
    <property type="entry name" value="CuRO_3_AAO"/>
</dbReference>
<dbReference type="InterPro" id="IPR017760">
    <property type="entry name" value="L-ascorbate_oxidase_pln"/>
</dbReference>
<dbReference type="NCBIfam" id="TIGR03388">
    <property type="entry name" value="ascorbase"/>
    <property type="match status" value="1"/>
</dbReference>
<dbReference type="PANTHER" id="PTHR11709:SF394">
    <property type="entry name" value="FI03373P-RELATED"/>
    <property type="match status" value="1"/>
</dbReference>
<dbReference type="PANTHER" id="PTHR11709">
    <property type="entry name" value="MULTI-COPPER OXIDASE"/>
    <property type="match status" value="1"/>
</dbReference>
<dbReference type="Pfam" id="PF00394">
    <property type="entry name" value="Cu-oxidase"/>
    <property type="match status" value="1"/>
</dbReference>
<dbReference type="Pfam" id="PF07731">
    <property type="entry name" value="Cu-oxidase_2"/>
    <property type="match status" value="1"/>
</dbReference>
<dbReference type="Pfam" id="PF07732">
    <property type="entry name" value="Cu-oxidase_3"/>
    <property type="match status" value="1"/>
</dbReference>
<dbReference type="SUPFAM" id="SSF49503">
    <property type="entry name" value="Cupredoxins"/>
    <property type="match status" value="3"/>
</dbReference>
<dbReference type="PROSITE" id="PS00079">
    <property type="entry name" value="MULTICOPPER_OXIDASE1"/>
    <property type="match status" value="1"/>
</dbReference>
<dbReference type="PROSITE" id="PS00080">
    <property type="entry name" value="MULTICOPPER_OXIDASE2"/>
    <property type="match status" value="1"/>
</dbReference>
<reference key="1">
    <citation type="journal article" date="1989" name="Proc. Natl. Acad. Sci. U.S.A.">
        <title>Primary structure of cucumber (Cucumis sativus) ascorbate oxidase deduced from cDNA sequence: homology with blue copper proteins and tissue-specific expression.</title>
        <authorList>
            <person name="Ohkawa J."/>
            <person name="Okada N."/>
            <person name="Shinmyo A."/>
            <person name="Takano M."/>
        </authorList>
    </citation>
    <scope>NUCLEOTIDE SEQUENCE [MRNA]</scope>
    <scope>PROTEIN SEQUENCE OF 34-58</scope>
</reference>
<name>ASO_CUCSA</name>